<reference key="1">
    <citation type="journal article" date="2005" name="Nucleic Acids Res.">
        <title>Genome dynamics and diversity of Shigella species, the etiologic agents of bacillary dysentery.</title>
        <authorList>
            <person name="Yang F."/>
            <person name="Yang J."/>
            <person name="Zhang X."/>
            <person name="Chen L."/>
            <person name="Jiang Y."/>
            <person name="Yan Y."/>
            <person name="Tang X."/>
            <person name="Wang J."/>
            <person name="Xiong Z."/>
            <person name="Dong J."/>
            <person name="Xue Y."/>
            <person name="Zhu Y."/>
            <person name="Xu X."/>
            <person name="Sun L."/>
            <person name="Chen S."/>
            <person name="Nie H."/>
            <person name="Peng J."/>
            <person name="Xu J."/>
            <person name="Wang Y."/>
            <person name="Yuan Z."/>
            <person name="Wen Y."/>
            <person name="Yao Z."/>
            <person name="Shen Y."/>
            <person name="Qiang B."/>
            <person name="Hou Y."/>
            <person name="Yu J."/>
            <person name="Jin Q."/>
        </authorList>
    </citation>
    <scope>NUCLEOTIDE SEQUENCE [LARGE SCALE GENOMIC DNA]</scope>
    <source>
        <strain>Sd197</strain>
    </source>
</reference>
<proteinExistence type="inferred from homology"/>
<evidence type="ECO:0000255" key="1">
    <source>
        <dbReference type="HAMAP-Rule" id="MF_01622"/>
    </source>
</evidence>
<keyword id="KW-1185">Reference proteome</keyword>
<keyword id="KW-0711">Selenium</keyword>
<keyword id="KW-0808">Transferase</keyword>
<feature type="chain" id="PRO_0000292717" description="tRNA 2-selenouridine synthase">
    <location>
        <begin position="1"/>
        <end position="364"/>
    </location>
</feature>
<feature type="domain" description="Rhodanese" evidence="1">
    <location>
        <begin position="14"/>
        <end position="137"/>
    </location>
</feature>
<feature type="active site" description="S-selanylcysteine intermediate" evidence="1">
    <location>
        <position position="97"/>
    </location>
</feature>
<comment type="function">
    <text evidence="1">Involved in the post-transcriptional modification of the uridine at the wobble position (U34) of tRNA(Lys), tRNA(Glu) and tRNA(Gln). Catalyzes the conversion of 2-thiouridine (S2U-RNA) to 2-selenouridine (Se2U-RNA). Acts in a two-step process involving geranylation of 2-thiouridine (S2U) to S-geranyl-2-thiouridine (geS2U) and subsequent selenation of the latter derivative to 2-selenouridine (Se2U) in the tRNA chain.</text>
</comment>
<comment type="catalytic activity">
    <reaction evidence="1">
        <text>5-methylaminomethyl-2-thiouridine(34) in tRNA + selenophosphate + (2E)-geranyl diphosphate + H2O + H(+) = 5-methylaminomethyl-2-selenouridine(34) in tRNA + (2E)-thiogeraniol + phosphate + diphosphate</text>
        <dbReference type="Rhea" id="RHEA:42716"/>
        <dbReference type="Rhea" id="RHEA-COMP:10195"/>
        <dbReference type="Rhea" id="RHEA-COMP:10196"/>
        <dbReference type="ChEBI" id="CHEBI:15377"/>
        <dbReference type="ChEBI" id="CHEBI:15378"/>
        <dbReference type="ChEBI" id="CHEBI:16144"/>
        <dbReference type="ChEBI" id="CHEBI:33019"/>
        <dbReference type="ChEBI" id="CHEBI:43474"/>
        <dbReference type="ChEBI" id="CHEBI:58057"/>
        <dbReference type="ChEBI" id="CHEBI:74455"/>
        <dbReference type="ChEBI" id="CHEBI:82743"/>
        <dbReference type="ChEBI" id="CHEBI:143703"/>
        <dbReference type="EC" id="2.9.1.3"/>
    </reaction>
    <physiologicalReaction direction="left-to-right" evidence="1">
        <dbReference type="Rhea" id="RHEA:42717"/>
    </physiologicalReaction>
</comment>
<comment type="catalytic activity">
    <reaction evidence="1">
        <text>5-methylaminomethyl-2-thiouridine(34) in tRNA + (2E)-geranyl diphosphate = 5-methylaminomethyl-S-(2E)-geranyl-thiouridine(34) in tRNA + diphosphate</text>
        <dbReference type="Rhea" id="RHEA:14085"/>
        <dbReference type="Rhea" id="RHEA-COMP:10195"/>
        <dbReference type="Rhea" id="RHEA-COMP:14654"/>
        <dbReference type="ChEBI" id="CHEBI:33019"/>
        <dbReference type="ChEBI" id="CHEBI:58057"/>
        <dbReference type="ChEBI" id="CHEBI:74455"/>
        <dbReference type="ChEBI" id="CHEBI:140632"/>
    </reaction>
    <physiologicalReaction direction="left-to-right" evidence="1">
        <dbReference type="Rhea" id="RHEA:14086"/>
    </physiologicalReaction>
</comment>
<comment type="catalytic activity">
    <reaction evidence="1">
        <text>5-methylaminomethyl-S-(2E)-geranyl-thiouridine(34) in tRNA + selenophosphate + H(+) = 5-methylaminomethyl-2-(Se-phospho)selenouridine(34) in tRNA + (2E)-thiogeraniol</text>
        <dbReference type="Rhea" id="RHEA:60172"/>
        <dbReference type="Rhea" id="RHEA-COMP:14654"/>
        <dbReference type="Rhea" id="RHEA-COMP:15523"/>
        <dbReference type="ChEBI" id="CHEBI:15378"/>
        <dbReference type="ChEBI" id="CHEBI:16144"/>
        <dbReference type="ChEBI" id="CHEBI:140632"/>
        <dbReference type="ChEBI" id="CHEBI:143702"/>
        <dbReference type="ChEBI" id="CHEBI:143703"/>
    </reaction>
    <physiologicalReaction direction="left-to-right" evidence="1">
        <dbReference type="Rhea" id="RHEA:60173"/>
    </physiologicalReaction>
</comment>
<comment type="catalytic activity">
    <reaction evidence="1">
        <text>5-methylaminomethyl-2-(Se-phospho)selenouridine(34) in tRNA + H2O = 5-methylaminomethyl-2-selenouridine(34) in tRNA + phosphate</text>
        <dbReference type="Rhea" id="RHEA:60176"/>
        <dbReference type="Rhea" id="RHEA-COMP:10196"/>
        <dbReference type="Rhea" id="RHEA-COMP:15523"/>
        <dbReference type="ChEBI" id="CHEBI:15377"/>
        <dbReference type="ChEBI" id="CHEBI:43474"/>
        <dbReference type="ChEBI" id="CHEBI:82743"/>
        <dbReference type="ChEBI" id="CHEBI:143702"/>
    </reaction>
    <physiologicalReaction direction="left-to-right" evidence="1">
        <dbReference type="Rhea" id="RHEA:60177"/>
    </physiologicalReaction>
</comment>
<comment type="subunit">
    <text evidence="1">Monomer.</text>
</comment>
<comment type="similarity">
    <text evidence="1">Belongs to the SelU family.</text>
</comment>
<sequence>MQERHTEQDYRALLIADTPIIDVRAPIEFEQGAMPAAINLPLMNNDERAAVGTCYKQQGSDAALALGHKLVAGEIRQQRMDAWRAACLQNPQGILCCARGGQRSHIVQSWLHAAGIDYPLVEGGYKALRQTAIQATIELAQKPIVLIGGCTGSGKTLLVQQQPNGVDLEGLARHRGSAFGRTLQPQLSQASFENLLAAEMLKTDARQNLRLWVLEDESRMIGSNHLPECLRERMTQAAIAVVEDPFEIRLERLNEEYFLRMHHDFTHAYGDEQGWQEYCEYLHHGLSAIKRRLGLQRYNELAARLDAALTTQLTTGSTDGHLAWLVPLLEEYYDPMYRYQLEKKAEKVVFRGEWAEVAEWVKAR</sequence>
<accession>Q32J96</accession>
<name>SELU_SHIDS</name>
<gene>
    <name evidence="1" type="primary">selU</name>
    <name type="ordered locus">SDY_0399</name>
</gene>
<dbReference type="EC" id="2.9.1.3" evidence="1"/>
<dbReference type="EMBL" id="CP000034">
    <property type="protein sequence ID" value="ABB60611.1"/>
    <property type="molecule type" value="Genomic_DNA"/>
</dbReference>
<dbReference type="RefSeq" id="YP_402100.1">
    <property type="nucleotide sequence ID" value="NC_007606.1"/>
</dbReference>
<dbReference type="SMR" id="Q32J96"/>
<dbReference type="STRING" id="300267.SDY_0399"/>
<dbReference type="EnsemblBacteria" id="ABB60611">
    <property type="protein sequence ID" value="ABB60611"/>
    <property type="gene ID" value="SDY_0399"/>
</dbReference>
<dbReference type="KEGG" id="sdy:SDY_0399"/>
<dbReference type="PATRIC" id="fig|300267.13.peg.473"/>
<dbReference type="HOGENOM" id="CLU_043456_1_0_6"/>
<dbReference type="Proteomes" id="UP000002716">
    <property type="component" value="Chromosome"/>
</dbReference>
<dbReference type="GO" id="GO:0016765">
    <property type="term" value="F:transferase activity, transferring alkyl or aryl (other than methyl) groups"/>
    <property type="evidence" value="ECO:0007669"/>
    <property type="project" value="UniProtKB-UniRule"/>
</dbReference>
<dbReference type="GO" id="GO:0043828">
    <property type="term" value="F:tRNA 2-selenouridine synthase activity"/>
    <property type="evidence" value="ECO:0007669"/>
    <property type="project" value="UniProtKB-EC"/>
</dbReference>
<dbReference type="GO" id="GO:0002098">
    <property type="term" value="P:tRNA wobble uridine modification"/>
    <property type="evidence" value="ECO:0007669"/>
    <property type="project" value="UniProtKB-UniRule"/>
</dbReference>
<dbReference type="CDD" id="cd01520">
    <property type="entry name" value="RHOD_YbbB"/>
    <property type="match status" value="1"/>
</dbReference>
<dbReference type="FunFam" id="3.40.250.10:FF:000009">
    <property type="entry name" value="tRNA 2-selenouridine/geranyl-2-thiouridine synthase"/>
    <property type="match status" value="1"/>
</dbReference>
<dbReference type="Gene3D" id="3.40.250.10">
    <property type="entry name" value="Rhodanese-like domain"/>
    <property type="match status" value="1"/>
</dbReference>
<dbReference type="HAMAP" id="MF_01622">
    <property type="entry name" value="tRNA_sel_U_synth"/>
    <property type="match status" value="1"/>
</dbReference>
<dbReference type="InterPro" id="IPR001763">
    <property type="entry name" value="Rhodanese-like_dom"/>
</dbReference>
<dbReference type="InterPro" id="IPR036873">
    <property type="entry name" value="Rhodanese-like_dom_sf"/>
</dbReference>
<dbReference type="InterPro" id="IPR017582">
    <property type="entry name" value="SelU"/>
</dbReference>
<dbReference type="NCBIfam" id="NF008749">
    <property type="entry name" value="PRK11784.1-1"/>
    <property type="match status" value="1"/>
</dbReference>
<dbReference type="NCBIfam" id="NF008751">
    <property type="entry name" value="PRK11784.1-3"/>
    <property type="match status" value="1"/>
</dbReference>
<dbReference type="NCBIfam" id="TIGR03167">
    <property type="entry name" value="tRNA_sel_U_synt"/>
    <property type="match status" value="1"/>
</dbReference>
<dbReference type="PANTHER" id="PTHR30401">
    <property type="entry name" value="TRNA 2-SELENOURIDINE SYNTHASE"/>
    <property type="match status" value="1"/>
</dbReference>
<dbReference type="PANTHER" id="PTHR30401:SF0">
    <property type="entry name" value="TRNA 2-SELENOURIDINE SYNTHASE"/>
    <property type="match status" value="1"/>
</dbReference>
<dbReference type="Pfam" id="PF00581">
    <property type="entry name" value="Rhodanese"/>
    <property type="match status" value="1"/>
</dbReference>
<dbReference type="SMART" id="SM00450">
    <property type="entry name" value="RHOD"/>
    <property type="match status" value="1"/>
</dbReference>
<dbReference type="SUPFAM" id="SSF52821">
    <property type="entry name" value="Rhodanese/Cell cycle control phosphatase"/>
    <property type="match status" value="1"/>
</dbReference>
<dbReference type="PROSITE" id="PS50206">
    <property type="entry name" value="RHODANESE_3"/>
    <property type="match status" value="1"/>
</dbReference>
<protein>
    <recommendedName>
        <fullName evidence="1">tRNA 2-selenouridine synthase</fullName>
        <ecNumber evidence="1">2.9.1.3</ecNumber>
    </recommendedName>
</protein>
<organism>
    <name type="scientific">Shigella dysenteriae serotype 1 (strain Sd197)</name>
    <dbReference type="NCBI Taxonomy" id="300267"/>
    <lineage>
        <taxon>Bacteria</taxon>
        <taxon>Pseudomonadati</taxon>
        <taxon>Pseudomonadota</taxon>
        <taxon>Gammaproteobacteria</taxon>
        <taxon>Enterobacterales</taxon>
        <taxon>Enterobacteriaceae</taxon>
        <taxon>Shigella</taxon>
    </lineage>
</organism>